<accession>A8Z2J3</accession>
<feature type="chain" id="PRO_1000075430" description="Glutamyl-tRNA reductase">
    <location>
        <begin position="1"/>
        <end position="448"/>
    </location>
</feature>
<feature type="active site" description="Nucleophile" evidence="1">
    <location>
        <position position="50"/>
    </location>
</feature>
<feature type="binding site" evidence="1">
    <location>
        <begin position="49"/>
        <end position="52"/>
    </location>
    <ligand>
        <name>substrate</name>
    </ligand>
</feature>
<feature type="binding site" evidence="1">
    <location>
        <position position="109"/>
    </location>
    <ligand>
        <name>substrate</name>
    </ligand>
</feature>
<feature type="binding site" evidence="1">
    <location>
        <begin position="114"/>
        <end position="116"/>
    </location>
    <ligand>
        <name>substrate</name>
    </ligand>
</feature>
<feature type="binding site" evidence="1">
    <location>
        <position position="120"/>
    </location>
    <ligand>
        <name>substrate</name>
    </ligand>
</feature>
<feature type="binding site" evidence="1">
    <location>
        <begin position="189"/>
        <end position="194"/>
    </location>
    <ligand>
        <name>NADP(+)</name>
        <dbReference type="ChEBI" id="CHEBI:58349"/>
    </ligand>
</feature>
<feature type="site" description="Important for activity" evidence="1">
    <location>
        <position position="99"/>
    </location>
</feature>
<name>HEM1_STAAT</name>
<evidence type="ECO:0000255" key="1">
    <source>
        <dbReference type="HAMAP-Rule" id="MF_00087"/>
    </source>
</evidence>
<comment type="function">
    <text evidence="1">Catalyzes the NADPH-dependent reduction of glutamyl-tRNA(Glu) to glutamate 1-semialdehyde (GSA).</text>
</comment>
<comment type="catalytic activity">
    <reaction evidence="1">
        <text>(S)-4-amino-5-oxopentanoate + tRNA(Glu) + NADP(+) = L-glutamyl-tRNA(Glu) + NADPH + H(+)</text>
        <dbReference type="Rhea" id="RHEA:12344"/>
        <dbReference type="Rhea" id="RHEA-COMP:9663"/>
        <dbReference type="Rhea" id="RHEA-COMP:9680"/>
        <dbReference type="ChEBI" id="CHEBI:15378"/>
        <dbReference type="ChEBI" id="CHEBI:57501"/>
        <dbReference type="ChEBI" id="CHEBI:57783"/>
        <dbReference type="ChEBI" id="CHEBI:58349"/>
        <dbReference type="ChEBI" id="CHEBI:78442"/>
        <dbReference type="ChEBI" id="CHEBI:78520"/>
        <dbReference type="EC" id="1.2.1.70"/>
    </reaction>
</comment>
<comment type="pathway">
    <text evidence="1">Porphyrin-containing compound metabolism; protoporphyrin-IX biosynthesis; 5-aminolevulinate from L-glutamyl-tRNA(Glu): step 1/2.</text>
</comment>
<comment type="subunit">
    <text evidence="1">Homodimer.</text>
</comment>
<comment type="domain">
    <text evidence="1">Possesses an unusual extended V-shaped dimeric structure with each monomer consisting of three distinct domains arranged along a curved 'spinal' alpha-helix. The N-terminal catalytic domain specifically recognizes the glutamate moiety of the substrate. The second domain is the NADPH-binding domain, and the third C-terminal domain is responsible for dimerization.</text>
</comment>
<comment type="miscellaneous">
    <text evidence="1">During catalysis, the active site Cys acts as a nucleophile attacking the alpha-carbonyl group of tRNA-bound glutamate with the formation of a thioester intermediate between enzyme and glutamate, and the concomitant release of tRNA(Glu). The thioester intermediate is finally reduced by direct hydride transfer from NADPH, to form the product GSA.</text>
</comment>
<comment type="similarity">
    <text evidence="1">Belongs to the glutamyl-tRNA reductase family.</text>
</comment>
<organism>
    <name type="scientific">Staphylococcus aureus (strain USA300 / TCH1516)</name>
    <dbReference type="NCBI Taxonomy" id="451516"/>
    <lineage>
        <taxon>Bacteria</taxon>
        <taxon>Bacillati</taxon>
        <taxon>Bacillota</taxon>
        <taxon>Bacilli</taxon>
        <taxon>Bacillales</taxon>
        <taxon>Staphylococcaceae</taxon>
        <taxon>Staphylococcus</taxon>
    </lineage>
</organism>
<reference key="1">
    <citation type="journal article" date="2007" name="BMC Microbiol.">
        <title>Subtle genetic changes enhance virulence of methicillin resistant and sensitive Staphylococcus aureus.</title>
        <authorList>
            <person name="Highlander S.K."/>
            <person name="Hulten K.G."/>
            <person name="Qin X."/>
            <person name="Jiang H."/>
            <person name="Yerrapragada S."/>
            <person name="Mason E.O. Jr."/>
            <person name="Shang Y."/>
            <person name="Williams T.M."/>
            <person name="Fortunov R.M."/>
            <person name="Liu Y."/>
            <person name="Igboeli O."/>
            <person name="Petrosino J."/>
            <person name="Tirumalai M."/>
            <person name="Uzman A."/>
            <person name="Fox G.E."/>
            <person name="Cardenas A.M."/>
            <person name="Muzny D.M."/>
            <person name="Hemphill L."/>
            <person name="Ding Y."/>
            <person name="Dugan S."/>
            <person name="Blyth P.R."/>
            <person name="Buhay C.J."/>
            <person name="Dinh H.H."/>
            <person name="Hawes A.C."/>
            <person name="Holder M."/>
            <person name="Kovar C.L."/>
            <person name="Lee S.L."/>
            <person name="Liu W."/>
            <person name="Nazareth L.V."/>
            <person name="Wang Q."/>
            <person name="Zhou J."/>
            <person name="Kaplan S.L."/>
            <person name="Weinstock G.M."/>
        </authorList>
    </citation>
    <scope>NUCLEOTIDE SEQUENCE [LARGE SCALE GENOMIC DNA]</scope>
    <source>
        <strain>USA300 / TCH1516</strain>
    </source>
</reference>
<keyword id="KW-0521">NADP</keyword>
<keyword id="KW-0560">Oxidoreductase</keyword>
<keyword id="KW-0627">Porphyrin biosynthesis</keyword>
<gene>
    <name evidence="1" type="primary">hemA</name>
    <name type="ordered locus">USA300HOU_1664</name>
</gene>
<dbReference type="EC" id="1.2.1.70" evidence="1"/>
<dbReference type="EMBL" id="CP000730">
    <property type="protein sequence ID" value="ABX29671.1"/>
    <property type="molecule type" value="Genomic_DNA"/>
</dbReference>
<dbReference type="RefSeq" id="WP_000545451.1">
    <property type="nucleotide sequence ID" value="NC_010079.1"/>
</dbReference>
<dbReference type="SMR" id="A8Z2J3"/>
<dbReference type="KEGG" id="sax:USA300HOU_1664"/>
<dbReference type="HOGENOM" id="CLU_035113_2_2_9"/>
<dbReference type="UniPathway" id="UPA00251">
    <property type="reaction ID" value="UER00316"/>
</dbReference>
<dbReference type="GO" id="GO:0008883">
    <property type="term" value="F:glutamyl-tRNA reductase activity"/>
    <property type="evidence" value="ECO:0007669"/>
    <property type="project" value="UniProtKB-UniRule"/>
</dbReference>
<dbReference type="GO" id="GO:0050661">
    <property type="term" value="F:NADP binding"/>
    <property type="evidence" value="ECO:0007669"/>
    <property type="project" value="InterPro"/>
</dbReference>
<dbReference type="GO" id="GO:0006782">
    <property type="term" value="P:protoporphyrinogen IX biosynthetic process"/>
    <property type="evidence" value="ECO:0007669"/>
    <property type="project" value="UniProtKB-UniRule"/>
</dbReference>
<dbReference type="CDD" id="cd05213">
    <property type="entry name" value="NAD_bind_Glutamyl_tRNA_reduct"/>
    <property type="match status" value="1"/>
</dbReference>
<dbReference type="FunFam" id="3.30.460.30:FF:000001">
    <property type="entry name" value="Glutamyl-tRNA reductase"/>
    <property type="match status" value="1"/>
</dbReference>
<dbReference type="FunFam" id="3.40.50.720:FF:000031">
    <property type="entry name" value="Glutamyl-tRNA reductase"/>
    <property type="match status" value="1"/>
</dbReference>
<dbReference type="Gene3D" id="3.30.460.30">
    <property type="entry name" value="Glutamyl-tRNA reductase, N-terminal domain"/>
    <property type="match status" value="1"/>
</dbReference>
<dbReference type="Gene3D" id="3.40.50.720">
    <property type="entry name" value="NAD(P)-binding Rossmann-like Domain"/>
    <property type="match status" value="1"/>
</dbReference>
<dbReference type="HAMAP" id="MF_00087">
    <property type="entry name" value="Glu_tRNA_reductase"/>
    <property type="match status" value="1"/>
</dbReference>
<dbReference type="InterPro" id="IPR000343">
    <property type="entry name" value="4pyrrol_synth_GluRdtase"/>
</dbReference>
<dbReference type="InterPro" id="IPR015896">
    <property type="entry name" value="4pyrrol_synth_GluRdtase_dimer"/>
</dbReference>
<dbReference type="InterPro" id="IPR015895">
    <property type="entry name" value="4pyrrol_synth_GluRdtase_N"/>
</dbReference>
<dbReference type="InterPro" id="IPR018214">
    <property type="entry name" value="GluRdtase_CS"/>
</dbReference>
<dbReference type="InterPro" id="IPR036453">
    <property type="entry name" value="GluRdtase_dimer_dom_sf"/>
</dbReference>
<dbReference type="InterPro" id="IPR036343">
    <property type="entry name" value="GluRdtase_N_sf"/>
</dbReference>
<dbReference type="InterPro" id="IPR036291">
    <property type="entry name" value="NAD(P)-bd_dom_sf"/>
</dbReference>
<dbReference type="InterPro" id="IPR006151">
    <property type="entry name" value="Shikm_DH/Glu-tRNA_Rdtase"/>
</dbReference>
<dbReference type="NCBIfam" id="TIGR01035">
    <property type="entry name" value="hemA"/>
    <property type="match status" value="1"/>
</dbReference>
<dbReference type="PANTHER" id="PTHR43120">
    <property type="entry name" value="GLUTAMYL-TRNA REDUCTASE 1, CHLOROPLASTIC"/>
    <property type="match status" value="1"/>
</dbReference>
<dbReference type="PANTHER" id="PTHR43120:SF1">
    <property type="entry name" value="GLUTAMYL-TRNA REDUCTASE 1, CHLOROPLASTIC"/>
    <property type="match status" value="1"/>
</dbReference>
<dbReference type="Pfam" id="PF00745">
    <property type="entry name" value="GlutR_dimer"/>
    <property type="match status" value="1"/>
</dbReference>
<dbReference type="Pfam" id="PF05201">
    <property type="entry name" value="GlutR_N"/>
    <property type="match status" value="1"/>
</dbReference>
<dbReference type="Pfam" id="PF01488">
    <property type="entry name" value="Shikimate_DH"/>
    <property type="match status" value="1"/>
</dbReference>
<dbReference type="PIRSF" id="PIRSF000445">
    <property type="entry name" value="4pyrrol_synth_GluRdtase"/>
    <property type="match status" value="1"/>
</dbReference>
<dbReference type="SUPFAM" id="SSF69742">
    <property type="entry name" value="Glutamyl tRNA-reductase catalytic, N-terminal domain"/>
    <property type="match status" value="1"/>
</dbReference>
<dbReference type="SUPFAM" id="SSF69075">
    <property type="entry name" value="Glutamyl tRNA-reductase dimerization domain"/>
    <property type="match status" value="1"/>
</dbReference>
<dbReference type="SUPFAM" id="SSF51735">
    <property type="entry name" value="NAD(P)-binding Rossmann-fold domains"/>
    <property type="match status" value="1"/>
</dbReference>
<dbReference type="PROSITE" id="PS00747">
    <property type="entry name" value="GLUTR"/>
    <property type="match status" value="1"/>
</dbReference>
<sequence length="448" mass="50099">MHFIAISINHRTADVALREQVAFRDDALRIAHEDLYETKSILENVILSTCNRTEVYAVVDQIHTGRYYIQRFLARAFGFEVDDIKAMSEVKVGDEAVEHLLRVTSGLDSIVLGETQILGQIRDAFFLAQSTGTTGTIFNHLFKQAITFAKRAHNETDIADNAVSVSYAAVELAKKVFGKLKSKQAIIIGAGEMSELSLLNLLGSGITDITVVNRTIENAMKLAAKHQVKYDELSSLPNLLESADIVISSTSAQSYIITNEMIERIAENRKQDSLVLIDIAVPRDIEPGISAITNIFNYDVDDLKGLVDANLRERQLAAATISEQIPAEIHAHNEWISMLGVVPVIRALREKAMAIQAETMDSIDRKLPGLSERERKIISKHTKSIINQMLKDPIKQAKELSSDKKSNEKLELFQNIFDIEAECPHEQAKQQKESKVKEISARRIFSFE</sequence>
<proteinExistence type="inferred from homology"/>
<protein>
    <recommendedName>
        <fullName evidence="1">Glutamyl-tRNA reductase</fullName>
        <shortName evidence="1">GluTR</shortName>
        <ecNumber evidence="1">1.2.1.70</ecNumber>
    </recommendedName>
</protein>